<comment type="function">
    <text evidence="4 6">The phosphoenolpyruvate-dependent sugar phosphotransferase system (sugar PTS), a major carbohydrate active transport system, catalyzes the phosphorylation of incoming sugar substrates concomitantly with their translocation across the cell membrane. The enzyme II LevDE PTS system is involved in fructose transport.</text>
</comment>
<comment type="function">
    <text evidence="2">LevD and LevE act as negative regulators of the levanase operon. They may be involved in a PTS-mediated phosphorylation of a regulator.</text>
</comment>
<comment type="subcellular location">
    <subcellularLocation>
        <location evidence="6">Cytoplasm</location>
    </subcellularLocation>
</comment>
<comment type="induction">
    <text evidence="3">By fructose and LevR.</text>
</comment>
<comment type="domain">
    <text evidence="1">The EIIA type-4 domain is phosphorylated by phospho-HPr on a histidyl residue. Then, it transfers the phosphoryl group to the EIIB type-4 domain.</text>
</comment>
<reference key="1">
    <citation type="journal article" date="1990" name="J. Mol. Biol.">
        <title>Levanase operon of Bacillus subtilis includes a fructose-specific phosphotransferase system regulating the expression of the operon.</title>
        <authorList>
            <person name="Martin-Verstraete I."/>
            <person name="Debarbouille M."/>
            <person name="Klier A."/>
            <person name="Rapoport G."/>
        </authorList>
    </citation>
    <scope>NUCLEOTIDE SEQUENCE [GENOMIC DNA]</scope>
    <scope>FUNCTION</scope>
    <scope>SUBCELLULAR LOCATION</scope>
    <source>
        <strain>168</strain>
    </source>
</reference>
<reference key="2">
    <citation type="journal article" date="1997" name="Microbiology">
        <title>A 23911 bp region of the Bacillus subtilis genome comprising genes located upstream and downstream of the lev operon.</title>
        <authorList>
            <person name="Parro V."/>
            <person name="San Roman M."/>
            <person name="Galindo I."/>
            <person name="Purnelle B."/>
            <person name="Bolotin A."/>
            <person name="Sorokin A."/>
            <person name="Mellado R.P."/>
        </authorList>
    </citation>
    <scope>NUCLEOTIDE SEQUENCE [GENOMIC DNA]</scope>
    <source>
        <strain>168</strain>
    </source>
</reference>
<reference key="3">
    <citation type="journal article" date="1997" name="Nature">
        <title>The complete genome sequence of the Gram-positive bacterium Bacillus subtilis.</title>
        <authorList>
            <person name="Kunst F."/>
            <person name="Ogasawara N."/>
            <person name="Moszer I."/>
            <person name="Albertini A.M."/>
            <person name="Alloni G."/>
            <person name="Azevedo V."/>
            <person name="Bertero M.G."/>
            <person name="Bessieres P."/>
            <person name="Bolotin A."/>
            <person name="Borchert S."/>
            <person name="Borriss R."/>
            <person name="Boursier L."/>
            <person name="Brans A."/>
            <person name="Braun M."/>
            <person name="Brignell S.C."/>
            <person name="Bron S."/>
            <person name="Brouillet S."/>
            <person name="Bruschi C.V."/>
            <person name="Caldwell B."/>
            <person name="Capuano V."/>
            <person name="Carter N.M."/>
            <person name="Choi S.-K."/>
            <person name="Codani J.-J."/>
            <person name="Connerton I.F."/>
            <person name="Cummings N.J."/>
            <person name="Daniel R.A."/>
            <person name="Denizot F."/>
            <person name="Devine K.M."/>
            <person name="Duesterhoeft A."/>
            <person name="Ehrlich S.D."/>
            <person name="Emmerson P.T."/>
            <person name="Entian K.-D."/>
            <person name="Errington J."/>
            <person name="Fabret C."/>
            <person name="Ferrari E."/>
            <person name="Foulger D."/>
            <person name="Fritz C."/>
            <person name="Fujita M."/>
            <person name="Fujita Y."/>
            <person name="Fuma S."/>
            <person name="Galizzi A."/>
            <person name="Galleron N."/>
            <person name="Ghim S.-Y."/>
            <person name="Glaser P."/>
            <person name="Goffeau A."/>
            <person name="Golightly E.J."/>
            <person name="Grandi G."/>
            <person name="Guiseppi G."/>
            <person name="Guy B.J."/>
            <person name="Haga K."/>
            <person name="Haiech J."/>
            <person name="Harwood C.R."/>
            <person name="Henaut A."/>
            <person name="Hilbert H."/>
            <person name="Holsappel S."/>
            <person name="Hosono S."/>
            <person name="Hullo M.-F."/>
            <person name="Itaya M."/>
            <person name="Jones L.-M."/>
            <person name="Joris B."/>
            <person name="Karamata D."/>
            <person name="Kasahara Y."/>
            <person name="Klaerr-Blanchard M."/>
            <person name="Klein C."/>
            <person name="Kobayashi Y."/>
            <person name="Koetter P."/>
            <person name="Koningstein G."/>
            <person name="Krogh S."/>
            <person name="Kumano M."/>
            <person name="Kurita K."/>
            <person name="Lapidus A."/>
            <person name="Lardinois S."/>
            <person name="Lauber J."/>
            <person name="Lazarevic V."/>
            <person name="Lee S.-M."/>
            <person name="Levine A."/>
            <person name="Liu H."/>
            <person name="Masuda S."/>
            <person name="Mauel C."/>
            <person name="Medigue C."/>
            <person name="Medina N."/>
            <person name="Mellado R.P."/>
            <person name="Mizuno M."/>
            <person name="Moestl D."/>
            <person name="Nakai S."/>
            <person name="Noback M."/>
            <person name="Noone D."/>
            <person name="O'Reilly M."/>
            <person name="Ogawa K."/>
            <person name="Ogiwara A."/>
            <person name="Oudega B."/>
            <person name="Park S.-H."/>
            <person name="Parro V."/>
            <person name="Pohl T.M."/>
            <person name="Portetelle D."/>
            <person name="Porwollik S."/>
            <person name="Prescott A.M."/>
            <person name="Presecan E."/>
            <person name="Pujic P."/>
            <person name="Purnelle B."/>
            <person name="Rapoport G."/>
            <person name="Rey M."/>
            <person name="Reynolds S."/>
            <person name="Rieger M."/>
            <person name="Rivolta C."/>
            <person name="Rocha E."/>
            <person name="Roche B."/>
            <person name="Rose M."/>
            <person name="Sadaie Y."/>
            <person name="Sato T."/>
            <person name="Scanlan E."/>
            <person name="Schleich S."/>
            <person name="Schroeter R."/>
            <person name="Scoffone F."/>
            <person name="Sekiguchi J."/>
            <person name="Sekowska A."/>
            <person name="Seror S.J."/>
            <person name="Serror P."/>
            <person name="Shin B.-S."/>
            <person name="Soldo B."/>
            <person name="Sorokin A."/>
            <person name="Tacconi E."/>
            <person name="Takagi T."/>
            <person name="Takahashi H."/>
            <person name="Takemaru K."/>
            <person name="Takeuchi M."/>
            <person name="Tamakoshi A."/>
            <person name="Tanaka T."/>
            <person name="Terpstra P."/>
            <person name="Tognoni A."/>
            <person name="Tosato V."/>
            <person name="Uchiyama S."/>
            <person name="Vandenbol M."/>
            <person name="Vannier F."/>
            <person name="Vassarotti A."/>
            <person name="Viari A."/>
            <person name="Wambutt R."/>
            <person name="Wedler E."/>
            <person name="Wedler H."/>
            <person name="Weitzenegger T."/>
            <person name="Winters P."/>
            <person name="Wipat A."/>
            <person name="Yamamoto H."/>
            <person name="Yamane K."/>
            <person name="Yasumoto K."/>
            <person name="Yata K."/>
            <person name="Yoshida K."/>
            <person name="Yoshikawa H.-F."/>
            <person name="Zumstein E."/>
            <person name="Yoshikawa H."/>
            <person name="Danchin A."/>
        </authorList>
    </citation>
    <scope>NUCLEOTIDE SEQUENCE [LARGE SCALE GENOMIC DNA]</scope>
    <source>
        <strain>168</strain>
    </source>
</reference>
<reference key="4">
    <citation type="journal article" date="1989" name="J. Bacteriol.">
        <title>Induction and metabolite regulation of levanase synthesis in Bacillus subtilis.</title>
        <authorList>
            <person name="Martin I."/>
            <person name="Debarbouille M."/>
            <person name="Klier A."/>
            <person name="Rapoport G."/>
        </authorList>
    </citation>
    <scope>INDUCTION</scope>
</reference>
<reference key="5">
    <citation type="journal article" date="1997" name="Biochemistry">
        <title>Protein phosphorylation chain of a Bacillus subtilis fructose-specific phosphotransferase system and its participation in regulation of the expression of the lev operon.</title>
        <authorList>
            <person name="Charrier V."/>
            <person name="Deutscher J."/>
            <person name="Galinier A."/>
            <person name="Martin-Verstraete I."/>
        </authorList>
    </citation>
    <scope>FUNCTION</scope>
    <scope>CATALYTIC ACTIVITY</scope>
    <scope>MUTAGENESIS OF HIS-9</scope>
    <scope>ACTIVE SITE</scope>
    <scope>PHOSPHORYLATION AT HIS-9</scope>
</reference>
<dbReference type="EMBL" id="X56098">
    <property type="protein sequence ID" value="CAA39577.1"/>
    <property type="molecule type" value="Genomic_DNA"/>
</dbReference>
<dbReference type="EMBL" id="X92868">
    <property type="protein sequence ID" value="CAA63461.1"/>
    <property type="molecule type" value="Genomic_DNA"/>
</dbReference>
<dbReference type="EMBL" id="AL009126">
    <property type="protein sequence ID" value="CAB14649.1"/>
    <property type="molecule type" value="Genomic_DNA"/>
</dbReference>
<dbReference type="PIR" id="S11398">
    <property type="entry name" value="S11398"/>
</dbReference>
<dbReference type="RefSeq" id="NP_390585.1">
    <property type="nucleotide sequence ID" value="NC_000964.3"/>
</dbReference>
<dbReference type="RefSeq" id="WP_003246144.1">
    <property type="nucleotide sequence ID" value="NZ_OZ025638.1"/>
</dbReference>
<dbReference type="SMR" id="P26379"/>
<dbReference type="FunCoup" id="P26379">
    <property type="interactions" value="57"/>
</dbReference>
<dbReference type="STRING" id="224308.BSU27070"/>
<dbReference type="TCDB" id="4.A.6.1.2">
    <property type="family name" value="the pts mannose-fructose-sorbose (man) family"/>
</dbReference>
<dbReference type="iPTMnet" id="P26379"/>
<dbReference type="PaxDb" id="224308-BSU27070"/>
<dbReference type="EnsemblBacteria" id="CAB14649">
    <property type="protein sequence ID" value="CAB14649"/>
    <property type="gene ID" value="BSU_27070"/>
</dbReference>
<dbReference type="GeneID" id="936536"/>
<dbReference type="KEGG" id="bsu:BSU27070"/>
<dbReference type="PATRIC" id="fig|224308.179.peg.2940"/>
<dbReference type="eggNOG" id="COG2893">
    <property type="taxonomic scope" value="Bacteria"/>
</dbReference>
<dbReference type="InParanoid" id="P26379"/>
<dbReference type="OrthoDB" id="9799827at2"/>
<dbReference type="PhylomeDB" id="P26379"/>
<dbReference type="BioCyc" id="BSUB:BSU27070-MONOMER"/>
<dbReference type="Proteomes" id="UP000001570">
    <property type="component" value="Chromosome"/>
</dbReference>
<dbReference type="GO" id="GO:0005737">
    <property type="term" value="C:cytoplasm"/>
    <property type="evidence" value="ECO:0007669"/>
    <property type="project" value="UniProtKB-SubCell"/>
</dbReference>
<dbReference type="GO" id="GO:1902495">
    <property type="term" value="C:transmembrane transporter complex"/>
    <property type="evidence" value="ECO:0000318"/>
    <property type="project" value="GO_Central"/>
</dbReference>
<dbReference type="GO" id="GO:0016301">
    <property type="term" value="F:kinase activity"/>
    <property type="evidence" value="ECO:0007669"/>
    <property type="project" value="UniProtKB-KW"/>
</dbReference>
<dbReference type="GO" id="GO:0008982">
    <property type="term" value="F:protein-N(PI)-phosphohistidine-sugar phosphotransferase activity"/>
    <property type="evidence" value="ECO:0000318"/>
    <property type="project" value="GO_Central"/>
</dbReference>
<dbReference type="GO" id="GO:0009401">
    <property type="term" value="P:phosphoenolpyruvate-dependent sugar phosphotransferase system"/>
    <property type="evidence" value="ECO:0000318"/>
    <property type="project" value="GO_Central"/>
</dbReference>
<dbReference type="CDD" id="cd00006">
    <property type="entry name" value="PTS_IIA_man"/>
    <property type="match status" value="1"/>
</dbReference>
<dbReference type="Gene3D" id="3.40.50.510">
    <property type="entry name" value="Phosphotransferase system, mannose-type IIA component"/>
    <property type="match status" value="1"/>
</dbReference>
<dbReference type="InterPro" id="IPR051471">
    <property type="entry name" value="Bacterial_PTS_sugar_comp"/>
</dbReference>
<dbReference type="InterPro" id="IPR013789">
    <property type="entry name" value="PTS_EIIA_man"/>
</dbReference>
<dbReference type="InterPro" id="IPR004701">
    <property type="entry name" value="PTS_EIIA_man-typ"/>
</dbReference>
<dbReference type="InterPro" id="IPR036662">
    <property type="entry name" value="PTS_EIIA_man-typ_sf"/>
</dbReference>
<dbReference type="InterPro" id="IPR033887">
    <property type="entry name" value="PTS_IIA_man"/>
</dbReference>
<dbReference type="NCBIfam" id="TIGR00824">
    <property type="entry name" value="EIIA-man"/>
    <property type="match status" value="1"/>
</dbReference>
<dbReference type="PANTHER" id="PTHR33799">
    <property type="entry name" value="PTS PERMEASE-RELATED-RELATED"/>
    <property type="match status" value="1"/>
</dbReference>
<dbReference type="PANTHER" id="PTHR33799:SF1">
    <property type="entry name" value="PTS SYSTEM MANNOSE-SPECIFIC EIIAB COMPONENT-RELATED"/>
    <property type="match status" value="1"/>
</dbReference>
<dbReference type="Pfam" id="PF03610">
    <property type="entry name" value="EIIA-man"/>
    <property type="match status" value="1"/>
</dbReference>
<dbReference type="SUPFAM" id="SSF53062">
    <property type="entry name" value="PTS system fructose IIA component-like"/>
    <property type="match status" value="1"/>
</dbReference>
<dbReference type="PROSITE" id="PS51096">
    <property type="entry name" value="PTS_EIIA_TYPE_4"/>
    <property type="match status" value="1"/>
</dbReference>
<organism>
    <name type="scientific">Bacillus subtilis (strain 168)</name>
    <dbReference type="NCBI Taxonomy" id="224308"/>
    <lineage>
        <taxon>Bacteria</taxon>
        <taxon>Bacillati</taxon>
        <taxon>Bacillota</taxon>
        <taxon>Bacilli</taxon>
        <taxon>Bacillales</taxon>
        <taxon>Bacillaceae</taxon>
        <taxon>Bacillus</taxon>
    </lineage>
</organism>
<accession>P26379</accession>
<feature type="chain" id="PRO_0000186523" description="PTS system fructose-specific EIIA component">
    <location>
        <begin position="1"/>
        <end position="146"/>
    </location>
</feature>
<feature type="domain" description="PTS EIIA type-4" evidence="1">
    <location>
        <begin position="1"/>
        <end position="124"/>
    </location>
</feature>
<feature type="active site" description="Tele-phosphohistidine intermediate" evidence="1 4">
    <location>
        <position position="9"/>
    </location>
</feature>
<feature type="modified residue" description="Phosphohistidine; by HPr" evidence="4">
    <location>
        <position position="9"/>
    </location>
</feature>
<feature type="mutagenesis site" description="Phosphorylation is only slightly increased." evidence="4">
    <original>H</original>
    <variation>A</variation>
    <location>
        <position position="9"/>
    </location>
</feature>
<keyword id="KW-0963">Cytoplasm</keyword>
<keyword id="KW-0418">Kinase</keyword>
<keyword id="KW-0597">Phosphoprotein</keyword>
<keyword id="KW-0598">Phosphotransferase system</keyword>
<keyword id="KW-1185">Reference proteome</keyword>
<keyword id="KW-0762">Sugar transport</keyword>
<keyword id="KW-0808">Transferase</keyword>
<keyword id="KW-0813">Transport</keyword>
<gene>
    <name evidence="5" type="primary">levD</name>
    <name type="synonym">sacL</name>
    <name type="ordered locus">BSU27070</name>
</gene>
<proteinExistence type="evidence at protein level"/>
<protein>
    <recommendedName>
        <fullName evidence="5">PTS system fructose-specific EIIA component</fullName>
    </recommendedName>
    <alternativeName>
        <fullName evidence="5">EIIA-Fru</fullName>
    </alternativeName>
    <alternativeName>
        <fullName evidence="5">Fructose-specific phosphotransferase enzyme IIA component</fullName>
    </alternativeName>
    <alternativeName>
        <fullName evidence="5">lev-PTS</fullName>
    </alternativeName>
    <alternativeName>
        <fullName evidence="5">p16</fullName>
    </alternativeName>
</protein>
<evidence type="ECO:0000255" key="1">
    <source>
        <dbReference type="PROSITE-ProRule" id="PRU00419"/>
    </source>
</evidence>
<evidence type="ECO:0000269" key="2">
    <source>
    </source>
</evidence>
<evidence type="ECO:0000269" key="3">
    <source>
    </source>
</evidence>
<evidence type="ECO:0000269" key="4">
    <source>
    </source>
</evidence>
<evidence type="ECO:0000303" key="5">
    <source>
    </source>
</evidence>
<evidence type="ECO:0000305" key="6">
    <source>
    </source>
</evidence>
<sequence length="146" mass="16257">MISVIISGHGDFPIALKESSGMIFGEENNLIAVPFFKGEGIQTLQEKYHQALKDIPEEHEVLFLVDIFGGTPYNAAASFIAEDQRMDMAAGVNLPILLEVLSLREHLALKDLLNNLKAMSQQSFQVCSEHLEKVKTANQDTREDEL</sequence>
<name>PTFA_BACSU</name>